<proteinExistence type="inferred from homology"/>
<accession>Q8PLN5</accession>
<reference key="1">
    <citation type="journal article" date="2002" name="Nature">
        <title>Comparison of the genomes of two Xanthomonas pathogens with differing host specificities.</title>
        <authorList>
            <person name="da Silva A.C.R."/>
            <person name="Ferro J.A."/>
            <person name="Reinach F.C."/>
            <person name="Farah C.S."/>
            <person name="Furlan L.R."/>
            <person name="Quaggio R.B."/>
            <person name="Monteiro-Vitorello C.B."/>
            <person name="Van Sluys M.A."/>
            <person name="Almeida N.F. Jr."/>
            <person name="Alves L.M.C."/>
            <person name="do Amaral A.M."/>
            <person name="Bertolini M.C."/>
            <person name="Camargo L.E.A."/>
            <person name="Camarotte G."/>
            <person name="Cannavan F."/>
            <person name="Cardozo J."/>
            <person name="Chambergo F."/>
            <person name="Ciapina L.P."/>
            <person name="Cicarelli R.M.B."/>
            <person name="Coutinho L.L."/>
            <person name="Cursino-Santos J.R."/>
            <person name="El-Dorry H."/>
            <person name="Faria J.B."/>
            <person name="Ferreira A.J.S."/>
            <person name="Ferreira R.C.C."/>
            <person name="Ferro M.I.T."/>
            <person name="Formighieri E.F."/>
            <person name="Franco M.C."/>
            <person name="Greggio C.C."/>
            <person name="Gruber A."/>
            <person name="Katsuyama A.M."/>
            <person name="Kishi L.T."/>
            <person name="Leite R.P."/>
            <person name="Lemos E.G.M."/>
            <person name="Lemos M.V.F."/>
            <person name="Locali E.C."/>
            <person name="Machado M.A."/>
            <person name="Madeira A.M.B.N."/>
            <person name="Martinez-Rossi N.M."/>
            <person name="Martins E.C."/>
            <person name="Meidanis J."/>
            <person name="Menck C.F.M."/>
            <person name="Miyaki C.Y."/>
            <person name="Moon D.H."/>
            <person name="Moreira L.M."/>
            <person name="Novo M.T.M."/>
            <person name="Okura V.K."/>
            <person name="Oliveira M.C."/>
            <person name="Oliveira V.R."/>
            <person name="Pereira H.A."/>
            <person name="Rossi A."/>
            <person name="Sena J.A.D."/>
            <person name="Silva C."/>
            <person name="de Souza R.F."/>
            <person name="Spinola L.A.F."/>
            <person name="Takita M.A."/>
            <person name="Tamura R.E."/>
            <person name="Teixeira E.C."/>
            <person name="Tezza R.I.D."/>
            <person name="Trindade dos Santos M."/>
            <person name="Truffi D."/>
            <person name="Tsai S.M."/>
            <person name="White F.F."/>
            <person name="Setubal J.C."/>
            <person name="Kitajima J.P."/>
        </authorList>
    </citation>
    <scope>NUCLEOTIDE SEQUENCE [LARGE SCALE GENOMIC DNA]</scope>
    <source>
        <strain>306</strain>
    </source>
</reference>
<organism>
    <name type="scientific">Xanthomonas axonopodis pv. citri (strain 306)</name>
    <dbReference type="NCBI Taxonomy" id="190486"/>
    <lineage>
        <taxon>Bacteria</taxon>
        <taxon>Pseudomonadati</taxon>
        <taxon>Pseudomonadota</taxon>
        <taxon>Gammaproteobacteria</taxon>
        <taxon>Lysobacterales</taxon>
        <taxon>Lysobacteraceae</taxon>
        <taxon>Xanthomonas</taxon>
    </lineage>
</organism>
<name>DAPA_XANAC</name>
<feature type="chain" id="PRO_0000103186" description="4-hydroxy-tetrahydrodipicolinate synthase">
    <location>
        <begin position="1"/>
        <end position="302"/>
    </location>
</feature>
<feature type="active site" description="Proton donor/acceptor" evidence="1">
    <location>
        <position position="134"/>
    </location>
</feature>
<feature type="active site" description="Schiff-base intermediate with substrate" evidence="1">
    <location>
        <position position="162"/>
    </location>
</feature>
<feature type="binding site" evidence="1">
    <location>
        <position position="46"/>
    </location>
    <ligand>
        <name>pyruvate</name>
        <dbReference type="ChEBI" id="CHEBI:15361"/>
    </ligand>
</feature>
<feature type="binding site" evidence="1">
    <location>
        <position position="204"/>
    </location>
    <ligand>
        <name>pyruvate</name>
        <dbReference type="ChEBI" id="CHEBI:15361"/>
    </ligand>
</feature>
<feature type="site" description="Part of a proton relay during catalysis" evidence="1">
    <location>
        <position position="45"/>
    </location>
</feature>
<feature type="site" description="Part of a proton relay during catalysis" evidence="1">
    <location>
        <position position="108"/>
    </location>
</feature>
<dbReference type="EC" id="4.3.3.7" evidence="1"/>
<dbReference type="EMBL" id="AE008923">
    <property type="protein sequence ID" value="AAM36624.1"/>
    <property type="molecule type" value="Genomic_DNA"/>
</dbReference>
<dbReference type="RefSeq" id="WP_011051123.1">
    <property type="nucleotide sequence ID" value="NC_003919.1"/>
</dbReference>
<dbReference type="SMR" id="Q8PLN5"/>
<dbReference type="GeneID" id="66910909"/>
<dbReference type="KEGG" id="xac:XAC1760"/>
<dbReference type="eggNOG" id="COG0329">
    <property type="taxonomic scope" value="Bacteria"/>
</dbReference>
<dbReference type="HOGENOM" id="CLU_049343_7_1_6"/>
<dbReference type="UniPathway" id="UPA00034">
    <property type="reaction ID" value="UER00017"/>
</dbReference>
<dbReference type="Proteomes" id="UP000000576">
    <property type="component" value="Chromosome"/>
</dbReference>
<dbReference type="GO" id="GO:0005829">
    <property type="term" value="C:cytosol"/>
    <property type="evidence" value="ECO:0007669"/>
    <property type="project" value="TreeGrafter"/>
</dbReference>
<dbReference type="GO" id="GO:0008840">
    <property type="term" value="F:4-hydroxy-tetrahydrodipicolinate synthase activity"/>
    <property type="evidence" value="ECO:0007669"/>
    <property type="project" value="UniProtKB-UniRule"/>
</dbReference>
<dbReference type="GO" id="GO:0019877">
    <property type="term" value="P:diaminopimelate biosynthetic process"/>
    <property type="evidence" value="ECO:0007669"/>
    <property type="project" value="UniProtKB-UniRule"/>
</dbReference>
<dbReference type="GO" id="GO:0009089">
    <property type="term" value="P:lysine biosynthetic process via diaminopimelate"/>
    <property type="evidence" value="ECO:0007669"/>
    <property type="project" value="UniProtKB-UniRule"/>
</dbReference>
<dbReference type="CDD" id="cd00950">
    <property type="entry name" value="DHDPS"/>
    <property type="match status" value="1"/>
</dbReference>
<dbReference type="Gene3D" id="3.20.20.70">
    <property type="entry name" value="Aldolase class I"/>
    <property type="match status" value="1"/>
</dbReference>
<dbReference type="HAMAP" id="MF_00418">
    <property type="entry name" value="DapA"/>
    <property type="match status" value="1"/>
</dbReference>
<dbReference type="InterPro" id="IPR013785">
    <property type="entry name" value="Aldolase_TIM"/>
</dbReference>
<dbReference type="InterPro" id="IPR005263">
    <property type="entry name" value="DapA"/>
</dbReference>
<dbReference type="InterPro" id="IPR002220">
    <property type="entry name" value="DapA-like"/>
</dbReference>
<dbReference type="InterPro" id="IPR020625">
    <property type="entry name" value="Schiff_base-form_aldolases_AS"/>
</dbReference>
<dbReference type="InterPro" id="IPR020624">
    <property type="entry name" value="Schiff_base-form_aldolases_CS"/>
</dbReference>
<dbReference type="NCBIfam" id="TIGR00674">
    <property type="entry name" value="dapA"/>
    <property type="match status" value="1"/>
</dbReference>
<dbReference type="PANTHER" id="PTHR12128:SF66">
    <property type="entry name" value="4-HYDROXY-2-OXOGLUTARATE ALDOLASE, MITOCHONDRIAL"/>
    <property type="match status" value="1"/>
</dbReference>
<dbReference type="PANTHER" id="PTHR12128">
    <property type="entry name" value="DIHYDRODIPICOLINATE SYNTHASE"/>
    <property type="match status" value="1"/>
</dbReference>
<dbReference type="Pfam" id="PF00701">
    <property type="entry name" value="DHDPS"/>
    <property type="match status" value="1"/>
</dbReference>
<dbReference type="PIRSF" id="PIRSF001365">
    <property type="entry name" value="DHDPS"/>
    <property type="match status" value="1"/>
</dbReference>
<dbReference type="PRINTS" id="PR00146">
    <property type="entry name" value="DHPICSNTHASE"/>
</dbReference>
<dbReference type="SMART" id="SM01130">
    <property type="entry name" value="DHDPS"/>
    <property type="match status" value="1"/>
</dbReference>
<dbReference type="SUPFAM" id="SSF51569">
    <property type="entry name" value="Aldolase"/>
    <property type="match status" value="1"/>
</dbReference>
<dbReference type="PROSITE" id="PS00665">
    <property type="entry name" value="DHDPS_1"/>
    <property type="match status" value="1"/>
</dbReference>
<dbReference type="PROSITE" id="PS00666">
    <property type="entry name" value="DHDPS_2"/>
    <property type="match status" value="1"/>
</dbReference>
<keyword id="KW-0028">Amino-acid biosynthesis</keyword>
<keyword id="KW-0963">Cytoplasm</keyword>
<keyword id="KW-0220">Diaminopimelate biosynthesis</keyword>
<keyword id="KW-0456">Lyase</keyword>
<keyword id="KW-0457">Lysine biosynthesis</keyword>
<keyword id="KW-0704">Schiff base</keyword>
<comment type="function">
    <text evidence="1">Catalyzes the condensation of (S)-aspartate-beta-semialdehyde [(S)-ASA] and pyruvate to 4-hydroxy-tetrahydrodipicolinate (HTPA).</text>
</comment>
<comment type="catalytic activity">
    <reaction evidence="1">
        <text>L-aspartate 4-semialdehyde + pyruvate = (2S,4S)-4-hydroxy-2,3,4,5-tetrahydrodipicolinate + H2O + H(+)</text>
        <dbReference type="Rhea" id="RHEA:34171"/>
        <dbReference type="ChEBI" id="CHEBI:15361"/>
        <dbReference type="ChEBI" id="CHEBI:15377"/>
        <dbReference type="ChEBI" id="CHEBI:15378"/>
        <dbReference type="ChEBI" id="CHEBI:67139"/>
        <dbReference type="ChEBI" id="CHEBI:537519"/>
        <dbReference type="EC" id="4.3.3.7"/>
    </reaction>
</comment>
<comment type="pathway">
    <text evidence="1">Amino-acid biosynthesis; L-lysine biosynthesis via DAP pathway; (S)-tetrahydrodipicolinate from L-aspartate: step 3/4.</text>
</comment>
<comment type="subunit">
    <text evidence="1">Homotetramer; dimer of dimers.</text>
</comment>
<comment type="subcellular location">
    <subcellularLocation>
        <location evidence="1">Cytoplasm</location>
    </subcellularLocation>
</comment>
<comment type="similarity">
    <text evidence="1">Belongs to the DapA family.</text>
</comment>
<comment type="caution">
    <text evidence="2">Was originally thought to be a dihydrodipicolinate synthase (DHDPS), catalyzing the condensation of (S)-aspartate-beta-semialdehyde [(S)-ASA] and pyruvate to dihydrodipicolinate (DHDP). However, it was shown in E.coli that the product of the enzymatic reaction is not dihydrodipicolinate but in fact (4S)-4-hydroxy-2,3,4,5-tetrahydro-(2S)-dipicolinic acid (HTPA), and that the consecutive dehydration reaction leading to DHDP is not spontaneous but catalyzed by DapB.</text>
</comment>
<evidence type="ECO:0000255" key="1">
    <source>
        <dbReference type="HAMAP-Rule" id="MF_00418"/>
    </source>
</evidence>
<evidence type="ECO:0000305" key="2"/>
<gene>
    <name evidence="1" type="primary">dapA</name>
    <name type="ordered locus">XAC1760</name>
</gene>
<protein>
    <recommendedName>
        <fullName evidence="1">4-hydroxy-tetrahydrodipicolinate synthase</fullName>
        <shortName evidence="1">HTPA synthase</shortName>
        <ecNumber evidence="1">4.3.3.7</ecNumber>
    </recommendedName>
</protein>
<sequence length="302" mass="31018">MSLSGIITALATPFGPDGALDLDAWRRLLEQQLHGGVQGLVVAGSTGEAAALSDDEYDTLLRAAAAQVAGRVPVLAGTGLSGTAKTIAQTRRAAALGAQYALVVTPPYVRPTQAGLKAHFLAVADEGGLPVVLYNVPGRTGCDLLPETVAELVGHPNIVGIKEARSEPERVAALVALRSDSFVVLSGDDGSAAHAMLSGAAGLISVASNALPAAYRRLCDLARDGQRDAAAAWDARLSEYHNFCGIESNPIPVKALLQRAGIGHGLRLPLLPLSAAHQPAADRLAADAIALEALSSREMLAA</sequence>